<evidence type="ECO:0000255" key="1"/>
<evidence type="ECO:0000269" key="2">
    <source>
    </source>
</evidence>
<evidence type="ECO:0000303" key="3">
    <source>
    </source>
</evidence>
<evidence type="ECO:0000305" key="4"/>
<feature type="chain" id="PRO_0000191999" description="Virulence protein YscR">
    <location>
        <begin position="1"/>
        <end position="215"/>
    </location>
</feature>
<feature type="transmembrane region" description="Helical" evidence="1">
    <location>
        <begin position="10"/>
        <end position="30"/>
    </location>
</feature>
<feature type="transmembrane region" description="Helical" evidence="1">
    <location>
        <begin position="53"/>
        <end position="73"/>
    </location>
</feature>
<feature type="transmembrane region" description="Helical" evidence="1">
    <location>
        <begin position="156"/>
        <end position="176"/>
    </location>
</feature>
<feature type="transmembrane region" description="Helical" evidence="1">
    <location>
        <begin position="188"/>
        <end position="208"/>
    </location>
</feature>
<comment type="subcellular location">
    <subcellularLocation>
        <location evidence="4">Cell membrane</location>
        <topology evidence="4">Multi-pass membrane protein</topology>
    </subcellularLocation>
</comment>
<comment type="induction">
    <text evidence="2">Repressed by methyl-3,4-dephostatin.</text>
</comment>
<comment type="similarity">
    <text evidence="4">Belongs to the FliP/MopC/SpaP family.</text>
</comment>
<gene>
    <name type="primary">yscR</name>
    <name evidence="3" type="synonym">ssaR</name>
    <name type="ordered locus">STM1419</name>
</gene>
<proteinExistence type="evidence at transcript level"/>
<sequence>MSLPDSPLQLIGILFLLSILPLIIVMGTSFLKLAVVFSILRNALGIQQVPPNIALYGLALVLSLFIMGPTLLAVKERWHPVQVAGAPFWTSEWDSKALAPYRQFLQKNSEEKEANYFRNLIKRTWPEDIKRKIKPDSLLILIPAFTVSQLTQAFRIGLLIYLPFLAIDLLISNILLAMGMMMVSPMTISLPFKLLIFLLAGGWDLTLAQLVQSFS</sequence>
<protein>
    <recommendedName>
        <fullName>Virulence protein YscR</fullName>
    </recommendedName>
</protein>
<name>YSCR_SALTY</name>
<keyword id="KW-1003">Cell membrane</keyword>
<keyword id="KW-0472">Membrane</keyword>
<keyword id="KW-1185">Reference proteome</keyword>
<keyword id="KW-0812">Transmembrane</keyword>
<keyword id="KW-1133">Transmembrane helix</keyword>
<keyword id="KW-0843">Virulence</keyword>
<dbReference type="EMBL" id="X99944">
    <property type="protein sequence ID" value="CAA68199.1"/>
    <property type="molecule type" value="Genomic_DNA"/>
</dbReference>
<dbReference type="EMBL" id="AE006468">
    <property type="protein sequence ID" value="AAL20343.1"/>
    <property type="molecule type" value="Genomic_DNA"/>
</dbReference>
<dbReference type="RefSeq" id="NP_460384.1">
    <property type="nucleotide sequence ID" value="NC_003197.2"/>
</dbReference>
<dbReference type="RefSeq" id="WP_000056367.1">
    <property type="nucleotide sequence ID" value="NC_003197.2"/>
</dbReference>
<dbReference type="SMR" id="P74890"/>
<dbReference type="STRING" id="99287.STM1419"/>
<dbReference type="PaxDb" id="99287-STM1419"/>
<dbReference type="GeneID" id="1252937"/>
<dbReference type="KEGG" id="stm:STM1419"/>
<dbReference type="PATRIC" id="fig|99287.12.peg.1503"/>
<dbReference type="HOGENOM" id="CLU_042028_2_0_6"/>
<dbReference type="OMA" id="VYIMAPV"/>
<dbReference type="PhylomeDB" id="P74890"/>
<dbReference type="BioCyc" id="SENT99287:STM1419-MONOMER"/>
<dbReference type="Proteomes" id="UP000001014">
    <property type="component" value="Chromosome"/>
</dbReference>
<dbReference type="GO" id="GO:0005886">
    <property type="term" value="C:plasma membrane"/>
    <property type="evidence" value="ECO:0000318"/>
    <property type="project" value="GO_Central"/>
</dbReference>
<dbReference type="GO" id="GO:0044780">
    <property type="term" value="P:bacterial-type flagellum assembly"/>
    <property type="evidence" value="ECO:0000318"/>
    <property type="project" value="GO_Central"/>
</dbReference>
<dbReference type="GO" id="GO:0071978">
    <property type="term" value="P:bacterial-type flagellum-dependent swarming motility"/>
    <property type="evidence" value="ECO:0000318"/>
    <property type="project" value="GO_Central"/>
</dbReference>
<dbReference type="GO" id="GO:0009306">
    <property type="term" value="P:protein secretion"/>
    <property type="evidence" value="ECO:0007669"/>
    <property type="project" value="InterPro"/>
</dbReference>
<dbReference type="InterPro" id="IPR005838">
    <property type="entry name" value="T3SS_IM_P"/>
</dbReference>
<dbReference type="InterPro" id="IPR005773">
    <property type="entry name" value="T3SS_YscR-like"/>
</dbReference>
<dbReference type="NCBIfam" id="NF009438">
    <property type="entry name" value="PRK12797.1"/>
    <property type="match status" value="1"/>
</dbReference>
<dbReference type="NCBIfam" id="TIGR01102">
    <property type="entry name" value="yscR"/>
    <property type="match status" value="1"/>
</dbReference>
<dbReference type="PANTHER" id="PTHR30587">
    <property type="entry name" value="FLAGELLAR BIOSYNTHETIC PROTEIN FLIP"/>
    <property type="match status" value="1"/>
</dbReference>
<dbReference type="PANTHER" id="PTHR30587:SF3">
    <property type="entry name" value="VIRULENCE PROTEIN YSCR"/>
    <property type="match status" value="1"/>
</dbReference>
<dbReference type="Pfam" id="PF00813">
    <property type="entry name" value="FliP"/>
    <property type="match status" value="1"/>
</dbReference>
<dbReference type="PRINTS" id="PR01302">
    <property type="entry name" value="TYPE3IMPPROT"/>
</dbReference>
<dbReference type="PROSITE" id="PS01060">
    <property type="entry name" value="FLIP_1"/>
    <property type="match status" value="1"/>
</dbReference>
<dbReference type="PROSITE" id="PS01061">
    <property type="entry name" value="FLIP_2"/>
    <property type="match status" value="1"/>
</dbReference>
<organism>
    <name type="scientific">Salmonella typhimurium (strain LT2 / SGSC1412 / ATCC 700720)</name>
    <dbReference type="NCBI Taxonomy" id="99287"/>
    <lineage>
        <taxon>Bacteria</taxon>
        <taxon>Pseudomonadati</taxon>
        <taxon>Pseudomonadota</taxon>
        <taxon>Gammaproteobacteria</taxon>
        <taxon>Enterobacterales</taxon>
        <taxon>Enterobacteriaceae</taxon>
        <taxon>Salmonella</taxon>
    </lineage>
</organism>
<reference key="1">
    <citation type="submission" date="1996-09" db="EMBL/GenBank/DDBJ databases">
        <authorList>
            <person name="Hensel M."/>
            <person name="Shea J.E."/>
            <person name="Baumler A.J."/>
            <person name="Gleeson C."/>
            <person name="Blattner F.R."/>
            <person name="Holden D.W."/>
        </authorList>
    </citation>
    <scope>NUCLEOTIDE SEQUENCE [GENOMIC DNA]</scope>
    <source>
        <strain>LT2</strain>
    </source>
</reference>
<reference key="2">
    <citation type="journal article" date="2001" name="Nature">
        <title>Complete genome sequence of Salmonella enterica serovar Typhimurium LT2.</title>
        <authorList>
            <person name="McClelland M."/>
            <person name="Sanderson K.E."/>
            <person name="Spieth J."/>
            <person name="Clifton S.W."/>
            <person name="Latreille P."/>
            <person name="Courtney L."/>
            <person name="Porwollik S."/>
            <person name="Ali J."/>
            <person name="Dante M."/>
            <person name="Du F."/>
            <person name="Hou S."/>
            <person name="Layman D."/>
            <person name="Leonard S."/>
            <person name="Nguyen C."/>
            <person name="Scott K."/>
            <person name="Holmes A."/>
            <person name="Grewal N."/>
            <person name="Mulvaney E."/>
            <person name="Ryan E."/>
            <person name="Sun H."/>
            <person name="Florea L."/>
            <person name="Miller W."/>
            <person name="Stoneking T."/>
            <person name="Nhan M."/>
            <person name="Waterston R."/>
            <person name="Wilson R.K."/>
        </authorList>
    </citation>
    <scope>NUCLEOTIDE SEQUENCE [LARGE SCALE GENOMIC DNA]</scope>
    <source>
        <strain>LT2 / SGSC1412 / ATCC 700720</strain>
    </source>
</reference>
<reference key="3">
    <citation type="journal article" date="2020" name="Cell Chem. Biol.">
        <title>Targeting Two-Component Systems Uncovers a Small-Molecule Inhibitor of Salmonella Virulence.</title>
        <authorList>
            <person name="Tsai C.N."/>
            <person name="MacNair C.R."/>
            <person name="Cao M.P.T."/>
            <person name="Perry J.N."/>
            <person name="Magolan J."/>
            <person name="Brown E.D."/>
            <person name="Coombes B.K."/>
        </authorList>
    </citation>
    <scope>INDUCTION</scope>
</reference>
<accession>P74890</accession>